<accession>M2SPA3</accession>
<proteinExistence type="evidence at protein level"/>
<keyword id="KW-0456">Lyase</keyword>
<keyword id="KW-0460">Magnesium</keyword>
<keyword id="KW-0479">Metal-binding</keyword>
<keyword id="KW-1185">Reference proteome</keyword>
<evidence type="ECO:0000250" key="1">
    <source>
        <dbReference type="UniProtKB" id="A0A348B794"/>
    </source>
</evidence>
<evidence type="ECO:0000250" key="2">
    <source>
        <dbReference type="UniProtKB" id="P13513"/>
    </source>
</evidence>
<evidence type="ECO:0000269" key="3">
    <source>
    </source>
</evidence>
<evidence type="ECO:0000303" key="4">
    <source>
    </source>
</evidence>
<evidence type="ECO:0000305" key="5"/>
<sequence length="325" mass="37226">MGHSAKDEAPVVALPKLGSIFTKLLRDLKYRTPQHKDTRPALEAAMLEYAVRSGAPYESEYAQRYFDVGLTLACAYYPTHSFAVKLHIAIYSWLAIYIDDDDDGNEDLIGFQERFQKGEPQPSALLQRFAENLQEMSIHFEPLVANFIVLSSLQFVAATLLERRSELHSLQHCKEAKRWPDYVRDRSGVPEAFAYFIFPRDECPDIGAYMQGIPDMMTYINYANDILSFHKETLAGETDNYINTRAVCEQREPFAMLEIVIAETIAANSRVVGLLDTRSDPVYARKWNEFFNGYIFFHVTARRYKLHVYTGLADVGTKWQEVFAG</sequence>
<gene>
    <name evidence="4" type="primary">BipA</name>
    <name type="ORF">COCSADRAFT_31812</name>
</gene>
<name>BIPA_COCSN</name>
<dbReference type="EC" id="4.2.3.-" evidence="3"/>
<dbReference type="EMBL" id="KB445637">
    <property type="protein sequence ID" value="EMD69038.1"/>
    <property type="molecule type" value="Genomic_DNA"/>
</dbReference>
<dbReference type="RefSeq" id="XP_007694115.1">
    <property type="nucleotide sequence ID" value="XM_007695925.1"/>
</dbReference>
<dbReference type="SMR" id="M2SPA3"/>
<dbReference type="STRING" id="665912.M2SPA3"/>
<dbReference type="GeneID" id="19136531"/>
<dbReference type="KEGG" id="bsc:COCSADRAFT_31812"/>
<dbReference type="eggNOG" id="ENOG502SQ3X">
    <property type="taxonomic scope" value="Eukaryota"/>
</dbReference>
<dbReference type="HOGENOM" id="CLU_052212_0_2_1"/>
<dbReference type="OMA" id="IKGTMEF"/>
<dbReference type="OrthoDB" id="3678451at2759"/>
<dbReference type="Proteomes" id="UP000016934">
    <property type="component" value="Unassembled WGS sequence"/>
</dbReference>
<dbReference type="GO" id="GO:0016838">
    <property type="term" value="F:carbon-oxygen lyase activity, acting on phosphates"/>
    <property type="evidence" value="ECO:0007669"/>
    <property type="project" value="InterPro"/>
</dbReference>
<dbReference type="GO" id="GO:0046872">
    <property type="term" value="F:metal ion binding"/>
    <property type="evidence" value="ECO:0007669"/>
    <property type="project" value="UniProtKB-KW"/>
</dbReference>
<dbReference type="Gene3D" id="1.10.600.10">
    <property type="entry name" value="Farnesyl Diphosphate Synthase"/>
    <property type="match status" value="1"/>
</dbReference>
<dbReference type="InterPro" id="IPR008949">
    <property type="entry name" value="Isoprenoid_synthase_dom_sf"/>
</dbReference>
<dbReference type="InterPro" id="IPR024652">
    <property type="entry name" value="Trichodiene_synth"/>
</dbReference>
<dbReference type="Pfam" id="PF06330">
    <property type="entry name" value="TRI5"/>
    <property type="match status" value="1"/>
</dbReference>
<dbReference type="SFLD" id="SFLDS00005">
    <property type="entry name" value="Isoprenoid_Synthase_Type_I"/>
    <property type="match status" value="1"/>
</dbReference>
<dbReference type="SFLD" id="SFLDG01021">
    <property type="entry name" value="Trichodiene_Synthase_Like"/>
    <property type="match status" value="1"/>
</dbReference>
<dbReference type="SUPFAM" id="SSF48576">
    <property type="entry name" value="Terpenoid synthases"/>
    <property type="match status" value="1"/>
</dbReference>
<protein>
    <recommendedName>
        <fullName evidence="4">Terpene synthase BipA</fullName>
        <ecNumber evidence="3">4.2.3.-</ecNumber>
    </recommendedName>
    <alternativeName>
        <fullName evidence="4">Minimal biosynthetic bip cluster protein A</fullName>
    </alternativeName>
    <alternativeName>
        <fullName evidence="4">Sesquiterpene cyclase BipA</fullName>
    </alternativeName>
</protein>
<comment type="function">
    <text evidence="3">Sesquiterpene cyclase; part of the minimal biosynthetic bip cluster that mediates the biosynthesis of bridged polycyclic sesquiterpenoids derived from sativene, isosativene, and longifolene (PubMed:38417166). The sesquiterpene cyclase BipA acts as a versatile cyclase that converts farnesyl diphosphate (FPP) into (-)-sativene as the dominant product and (-)-isosativene and (-)-longifolene as minor ones (PubMed:38417166). The cytochrome P450 monooxygenase BipB then hydroxylates different enantiomeric sesquiterpenes, such as (-)-longifolene and (+)-longifolene, at C-15 and C-14 (PubMed:38417166). The C-15- or both C-15- and C-14-hydroxylated products are further oxidized by unclustered oxidases, resulting in a structurally diverse array of sesquiterpenoids (PubMed:38417166). The BipB-catalyzed hydroxylation at C-15 serves as an initiator for the oxidation by the unclustered oxidases (PubMed:38417166).</text>
</comment>
<comment type="cofactor">
    <cofactor evidence="2">
        <name>Mg(2+)</name>
        <dbReference type="ChEBI" id="CHEBI:18420"/>
    </cofactor>
</comment>
<comment type="pathway">
    <text evidence="3">Sesquiterpene biosynthesis.</text>
</comment>
<comment type="domain">
    <text evidence="5">The conserved DDXXD and NSE/DTE motifs are important for the catalytic activity, presumably through binding to Mg(2+).</text>
</comment>
<comment type="similarity">
    <text evidence="5">Belongs to the trichodiene synthase family.</text>
</comment>
<reference key="1">
    <citation type="journal article" date="2012" name="PLoS Pathog.">
        <title>Diverse lifestyles and strategies of plant pathogenesis encoded in the genomes of eighteen Dothideomycetes fungi.</title>
        <authorList>
            <person name="Ohm R.A."/>
            <person name="Feau N."/>
            <person name="Henrissat B."/>
            <person name="Schoch C.L."/>
            <person name="Horwitz B.A."/>
            <person name="Barry K.W."/>
            <person name="Condon B.J."/>
            <person name="Copeland A.C."/>
            <person name="Dhillon B."/>
            <person name="Glaser F."/>
            <person name="Hesse C.N."/>
            <person name="Kosti I."/>
            <person name="LaButti K."/>
            <person name="Lindquist E.A."/>
            <person name="Lucas S."/>
            <person name="Salamov A.A."/>
            <person name="Bradshaw R.E."/>
            <person name="Ciuffetti L."/>
            <person name="Hamelin R.C."/>
            <person name="Kema G.H.J."/>
            <person name="Lawrence C."/>
            <person name="Scott J.A."/>
            <person name="Spatafora J.W."/>
            <person name="Turgeon B.G."/>
            <person name="de Wit P.J.G.M."/>
            <person name="Zhong S."/>
            <person name="Goodwin S.B."/>
            <person name="Grigoriev I.V."/>
        </authorList>
    </citation>
    <scope>NUCLEOTIDE SEQUENCE [LARGE SCALE GENOMIC DNA]</scope>
    <source>
        <strain>ND90Pr / ATCC 201652</strain>
    </source>
</reference>
<reference key="2">
    <citation type="journal article" date="2013" name="PLoS Genet.">
        <title>Comparative genome structure, secondary metabolite, and effector coding capacity across Cochliobolus pathogens.</title>
        <authorList>
            <person name="Condon B.J."/>
            <person name="Leng Y."/>
            <person name="Wu D."/>
            <person name="Bushley K.E."/>
            <person name="Ohm R.A."/>
            <person name="Otillar R."/>
            <person name="Martin J."/>
            <person name="Schackwitz W."/>
            <person name="Grimwood J."/>
            <person name="MohdZainudin N."/>
            <person name="Xue C."/>
            <person name="Wang R."/>
            <person name="Manning V.A."/>
            <person name="Dhillon B."/>
            <person name="Tu Z.J."/>
            <person name="Steffenson B.J."/>
            <person name="Salamov A."/>
            <person name="Sun H."/>
            <person name="Lowry S."/>
            <person name="LaButti K."/>
            <person name="Han J."/>
            <person name="Copeland A."/>
            <person name="Lindquist E."/>
            <person name="Barry K."/>
            <person name="Schmutz J."/>
            <person name="Baker S.E."/>
            <person name="Ciuffetti L.M."/>
            <person name="Grigoriev I.V."/>
            <person name="Zhong S."/>
            <person name="Turgeon B.G."/>
        </authorList>
    </citation>
    <scope>NUCLEOTIDE SEQUENCE [LARGE SCALE GENOMIC DNA]</scope>
    <source>
        <strain>ND90Pr / ATCC 201652</strain>
    </source>
</reference>
<reference key="3">
    <citation type="journal article" date="2024" name="J. Nat. Prod.">
        <title>Divergent Biosynthesis of Bridged Polycyclic Sesquiterpenoids by a Minimal Fungal Biosynthetic Gene Cluster.</title>
        <authorList>
            <person name="Zhang M.M."/>
            <person name="Long Y."/>
            <person name="Li Y."/>
            <person name="Cui J.J."/>
            <person name="Lv T."/>
            <person name="Luo S."/>
            <person name="Gao K."/>
            <person name="Dong S.H."/>
        </authorList>
    </citation>
    <scope>FUNCTION</scope>
    <scope>CATALYTIC ACTIVITY</scope>
    <scope>PATHWAY</scope>
</reference>
<feature type="chain" id="PRO_0000461289" description="Terpene synthase BipA">
    <location>
        <begin position="1"/>
        <end position="325"/>
    </location>
</feature>
<feature type="short sequence motif" description="DDXXXXD motif" evidence="1">
    <location>
        <begin position="99"/>
        <end position="104"/>
    </location>
</feature>
<feature type="short sequence motif" description="NSE/DTE motif" evidence="1">
    <location>
        <begin position="224"/>
        <end position="232"/>
    </location>
</feature>
<feature type="binding site" evidence="2">
    <location>
        <position position="99"/>
    </location>
    <ligand>
        <name>Mg(2+)</name>
        <dbReference type="ChEBI" id="CHEBI:18420"/>
        <label>1</label>
    </ligand>
</feature>
<feature type="binding site" evidence="2">
    <location>
        <position position="162"/>
    </location>
    <ligand>
        <name>Mg(2+)</name>
        <dbReference type="ChEBI" id="CHEBI:18420"/>
        <label>1</label>
    </ligand>
</feature>
<feature type="binding site" evidence="2">
    <location>
        <position position="224"/>
    </location>
    <ligand>
        <name>Mg(2+)</name>
        <dbReference type="ChEBI" id="CHEBI:18420"/>
        <label>2</label>
    </ligand>
</feature>
<feature type="binding site" evidence="2">
    <location>
        <position position="228"/>
    </location>
    <ligand>
        <name>Mg(2+)</name>
        <dbReference type="ChEBI" id="CHEBI:18420"/>
        <label>2</label>
    </ligand>
</feature>
<feature type="binding site" evidence="2">
    <location>
        <position position="232"/>
    </location>
    <ligand>
        <name>Mg(2+)</name>
        <dbReference type="ChEBI" id="CHEBI:18420"/>
        <label>2</label>
    </ligand>
</feature>
<organism>
    <name type="scientific">Cochliobolus sativus (strain ND90Pr / ATCC 201652)</name>
    <name type="common">Common root rot and spot blotch fungus</name>
    <name type="synonym">Bipolaris sorokiniana</name>
    <dbReference type="NCBI Taxonomy" id="665912"/>
    <lineage>
        <taxon>Eukaryota</taxon>
        <taxon>Fungi</taxon>
        <taxon>Dikarya</taxon>
        <taxon>Ascomycota</taxon>
        <taxon>Pezizomycotina</taxon>
        <taxon>Dothideomycetes</taxon>
        <taxon>Pleosporomycetidae</taxon>
        <taxon>Pleosporales</taxon>
        <taxon>Pleosporineae</taxon>
        <taxon>Pleosporaceae</taxon>
        <taxon>Bipolaris</taxon>
    </lineage>
</organism>